<protein>
    <recommendedName>
        <fullName>Coiled-coil domain-containing protein 71</fullName>
    </recommendedName>
</protein>
<evidence type="ECO:0000250" key="1">
    <source>
        <dbReference type="UniProtKB" id="Q8IV32"/>
    </source>
</evidence>
<evidence type="ECO:0000255" key="2"/>
<evidence type="ECO:0000256" key="3">
    <source>
        <dbReference type="SAM" id="MobiDB-lite"/>
    </source>
</evidence>
<evidence type="ECO:0000305" key="4"/>
<keyword id="KW-0175">Coiled coil</keyword>
<keyword id="KW-0597">Phosphoprotein</keyword>
<keyword id="KW-1185">Reference proteome</keyword>
<gene>
    <name type="primary">Ccdc71</name>
</gene>
<reference key="1">
    <citation type="journal article" date="2005" name="Science">
        <title>The transcriptional landscape of the mammalian genome.</title>
        <authorList>
            <person name="Carninci P."/>
            <person name="Kasukawa T."/>
            <person name="Katayama S."/>
            <person name="Gough J."/>
            <person name="Frith M.C."/>
            <person name="Maeda N."/>
            <person name="Oyama R."/>
            <person name="Ravasi T."/>
            <person name="Lenhard B."/>
            <person name="Wells C."/>
            <person name="Kodzius R."/>
            <person name="Shimokawa K."/>
            <person name="Bajic V.B."/>
            <person name="Brenner S.E."/>
            <person name="Batalov S."/>
            <person name="Forrest A.R."/>
            <person name="Zavolan M."/>
            <person name="Davis M.J."/>
            <person name="Wilming L.G."/>
            <person name="Aidinis V."/>
            <person name="Allen J.E."/>
            <person name="Ambesi-Impiombato A."/>
            <person name="Apweiler R."/>
            <person name="Aturaliya R.N."/>
            <person name="Bailey T.L."/>
            <person name="Bansal M."/>
            <person name="Baxter L."/>
            <person name="Beisel K.W."/>
            <person name="Bersano T."/>
            <person name="Bono H."/>
            <person name="Chalk A.M."/>
            <person name="Chiu K.P."/>
            <person name="Choudhary V."/>
            <person name="Christoffels A."/>
            <person name="Clutterbuck D.R."/>
            <person name="Crowe M.L."/>
            <person name="Dalla E."/>
            <person name="Dalrymple B.P."/>
            <person name="de Bono B."/>
            <person name="Della Gatta G."/>
            <person name="di Bernardo D."/>
            <person name="Down T."/>
            <person name="Engstrom P."/>
            <person name="Fagiolini M."/>
            <person name="Faulkner G."/>
            <person name="Fletcher C.F."/>
            <person name="Fukushima T."/>
            <person name="Furuno M."/>
            <person name="Futaki S."/>
            <person name="Gariboldi M."/>
            <person name="Georgii-Hemming P."/>
            <person name="Gingeras T.R."/>
            <person name="Gojobori T."/>
            <person name="Green R.E."/>
            <person name="Gustincich S."/>
            <person name="Harbers M."/>
            <person name="Hayashi Y."/>
            <person name="Hensch T.K."/>
            <person name="Hirokawa N."/>
            <person name="Hill D."/>
            <person name="Huminiecki L."/>
            <person name="Iacono M."/>
            <person name="Ikeo K."/>
            <person name="Iwama A."/>
            <person name="Ishikawa T."/>
            <person name="Jakt M."/>
            <person name="Kanapin A."/>
            <person name="Katoh M."/>
            <person name="Kawasawa Y."/>
            <person name="Kelso J."/>
            <person name="Kitamura H."/>
            <person name="Kitano H."/>
            <person name="Kollias G."/>
            <person name="Krishnan S.P."/>
            <person name="Kruger A."/>
            <person name="Kummerfeld S.K."/>
            <person name="Kurochkin I.V."/>
            <person name="Lareau L.F."/>
            <person name="Lazarevic D."/>
            <person name="Lipovich L."/>
            <person name="Liu J."/>
            <person name="Liuni S."/>
            <person name="McWilliam S."/>
            <person name="Madan Babu M."/>
            <person name="Madera M."/>
            <person name="Marchionni L."/>
            <person name="Matsuda H."/>
            <person name="Matsuzawa S."/>
            <person name="Miki H."/>
            <person name="Mignone F."/>
            <person name="Miyake S."/>
            <person name="Morris K."/>
            <person name="Mottagui-Tabar S."/>
            <person name="Mulder N."/>
            <person name="Nakano N."/>
            <person name="Nakauchi H."/>
            <person name="Ng P."/>
            <person name="Nilsson R."/>
            <person name="Nishiguchi S."/>
            <person name="Nishikawa S."/>
            <person name="Nori F."/>
            <person name="Ohara O."/>
            <person name="Okazaki Y."/>
            <person name="Orlando V."/>
            <person name="Pang K.C."/>
            <person name="Pavan W.J."/>
            <person name="Pavesi G."/>
            <person name="Pesole G."/>
            <person name="Petrovsky N."/>
            <person name="Piazza S."/>
            <person name="Reed J."/>
            <person name="Reid J.F."/>
            <person name="Ring B.Z."/>
            <person name="Ringwald M."/>
            <person name="Rost B."/>
            <person name="Ruan Y."/>
            <person name="Salzberg S.L."/>
            <person name="Sandelin A."/>
            <person name="Schneider C."/>
            <person name="Schoenbach C."/>
            <person name="Sekiguchi K."/>
            <person name="Semple C.A."/>
            <person name="Seno S."/>
            <person name="Sessa L."/>
            <person name="Sheng Y."/>
            <person name="Shibata Y."/>
            <person name="Shimada H."/>
            <person name="Shimada K."/>
            <person name="Silva D."/>
            <person name="Sinclair B."/>
            <person name="Sperling S."/>
            <person name="Stupka E."/>
            <person name="Sugiura K."/>
            <person name="Sultana R."/>
            <person name="Takenaka Y."/>
            <person name="Taki K."/>
            <person name="Tammoja K."/>
            <person name="Tan S.L."/>
            <person name="Tang S."/>
            <person name="Taylor M.S."/>
            <person name="Tegner J."/>
            <person name="Teichmann S.A."/>
            <person name="Ueda H.R."/>
            <person name="van Nimwegen E."/>
            <person name="Verardo R."/>
            <person name="Wei C.L."/>
            <person name="Yagi K."/>
            <person name="Yamanishi H."/>
            <person name="Zabarovsky E."/>
            <person name="Zhu S."/>
            <person name="Zimmer A."/>
            <person name="Hide W."/>
            <person name="Bult C."/>
            <person name="Grimmond S.M."/>
            <person name="Teasdale R.D."/>
            <person name="Liu E.T."/>
            <person name="Brusic V."/>
            <person name="Quackenbush J."/>
            <person name="Wahlestedt C."/>
            <person name="Mattick J.S."/>
            <person name="Hume D.A."/>
            <person name="Kai C."/>
            <person name="Sasaki D."/>
            <person name="Tomaru Y."/>
            <person name="Fukuda S."/>
            <person name="Kanamori-Katayama M."/>
            <person name="Suzuki M."/>
            <person name="Aoki J."/>
            <person name="Arakawa T."/>
            <person name="Iida J."/>
            <person name="Imamura K."/>
            <person name="Itoh M."/>
            <person name="Kato T."/>
            <person name="Kawaji H."/>
            <person name="Kawagashira N."/>
            <person name="Kawashima T."/>
            <person name="Kojima M."/>
            <person name="Kondo S."/>
            <person name="Konno H."/>
            <person name="Nakano K."/>
            <person name="Ninomiya N."/>
            <person name="Nishio T."/>
            <person name="Okada M."/>
            <person name="Plessy C."/>
            <person name="Shibata K."/>
            <person name="Shiraki T."/>
            <person name="Suzuki S."/>
            <person name="Tagami M."/>
            <person name="Waki K."/>
            <person name="Watahiki A."/>
            <person name="Okamura-Oho Y."/>
            <person name="Suzuki H."/>
            <person name="Kawai J."/>
            <person name="Hayashizaki Y."/>
        </authorList>
    </citation>
    <scope>NUCLEOTIDE SEQUENCE [LARGE SCALE MRNA]</scope>
    <source>
        <strain>C57BL/6J</strain>
        <tissue>Bone marrow</tissue>
        <tissue>Head</tissue>
        <tissue>Retina</tissue>
        <tissue>Testis</tissue>
    </source>
</reference>
<reference key="2">
    <citation type="journal article" date="2004" name="Genome Res.">
        <title>The status, quality, and expansion of the NIH full-length cDNA project: the Mammalian Gene Collection (MGC).</title>
        <authorList>
            <consortium name="The MGC Project Team"/>
        </authorList>
    </citation>
    <scope>NUCLEOTIDE SEQUENCE [LARGE SCALE MRNA]</scope>
    <source>
        <strain>FVB/N</strain>
        <tissue>Mammary tumor</tissue>
    </source>
</reference>
<dbReference type="EMBL" id="AK044601">
    <property type="protein sequence ID" value="BAC31997.1"/>
    <property type="molecule type" value="mRNA"/>
</dbReference>
<dbReference type="EMBL" id="AK086560">
    <property type="protein sequence ID" value="BAC39691.1"/>
    <property type="molecule type" value="mRNA"/>
</dbReference>
<dbReference type="EMBL" id="AK149878">
    <property type="protein sequence ID" value="BAE29140.1"/>
    <property type="molecule type" value="mRNA"/>
</dbReference>
<dbReference type="EMBL" id="AK161396">
    <property type="protein sequence ID" value="BAE36372.1"/>
    <property type="molecule type" value="mRNA"/>
</dbReference>
<dbReference type="EMBL" id="BC018518">
    <property type="protein sequence ID" value="AAH18518.1"/>
    <property type="molecule type" value="mRNA"/>
</dbReference>
<dbReference type="CCDS" id="CCDS23527.1"/>
<dbReference type="RefSeq" id="NP_001365859.1">
    <property type="nucleotide sequence ID" value="NM_001378930.1"/>
</dbReference>
<dbReference type="RefSeq" id="NP_001365860.1">
    <property type="nucleotide sequence ID" value="NM_001378931.1"/>
</dbReference>
<dbReference type="RefSeq" id="NP_598505.1">
    <property type="nucleotide sequence ID" value="NM_133744.5"/>
</dbReference>
<dbReference type="RefSeq" id="XP_006511900.1">
    <property type="nucleotide sequence ID" value="XM_006511837.3"/>
</dbReference>
<dbReference type="SMR" id="Q8VEG0"/>
<dbReference type="FunCoup" id="Q8VEG0">
    <property type="interactions" value="98"/>
</dbReference>
<dbReference type="STRING" id="10090.ENSMUSP00000057891"/>
<dbReference type="iPTMnet" id="Q8VEG0"/>
<dbReference type="PhosphoSitePlus" id="Q8VEG0"/>
<dbReference type="jPOST" id="Q8VEG0"/>
<dbReference type="PaxDb" id="10090-ENSMUSP00000057891"/>
<dbReference type="ProteomicsDB" id="281315"/>
<dbReference type="Antibodypedia" id="56320">
    <property type="antibodies" value="62 antibodies from 15 providers"/>
</dbReference>
<dbReference type="DNASU" id="72454"/>
<dbReference type="Ensembl" id="ENSMUST00000061209.7">
    <property type="protein sequence ID" value="ENSMUSP00000057891.6"/>
    <property type="gene ID" value="ENSMUSG00000049305.7"/>
</dbReference>
<dbReference type="Ensembl" id="ENSMUST00000193170.2">
    <property type="protein sequence ID" value="ENSMUSP00000142230.2"/>
    <property type="gene ID" value="ENSMUSG00000049305.7"/>
</dbReference>
<dbReference type="GeneID" id="72454"/>
<dbReference type="KEGG" id="mmu:72454"/>
<dbReference type="UCSC" id="uc009rpq.2">
    <property type="organism name" value="mouse"/>
</dbReference>
<dbReference type="AGR" id="MGI:1919704"/>
<dbReference type="CTD" id="64925"/>
<dbReference type="MGI" id="MGI:1919704">
    <property type="gene designation" value="Ccdc71"/>
</dbReference>
<dbReference type="VEuPathDB" id="HostDB:ENSMUSG00000049305"/>
<dbReference type="eggNOG" id="ENOG502RY9H">
    <property type="taxonomic scope" value="Eukaryota"/>
</dbReference>
<dbReference type="GeneTree" id="ENSGT00940000155306"/>
<dbReference type="HOGENOM" id="CLU_049410_1_0_1"/>
<dbReference type="InParanoid" id="Q8VEG0"/>
<dbReference type="OMA" id="CPETVGQ"/>
<dbReference type="OrthoDB" id="8522252at2759"/>
<dbReference type="PhylomeDB" id="Q8VEG0"/>
<dbReference type="TreeFam" id="TF336191"/>
<dbReference type="BioGRID-ORCS" id="72454">
    <property type="hits" value="3 hits in 78 CRISPR screens"/>
</dbReference>
<dbReference type="ChiTaRS" id="Ccdc71">
    <property type="organism name" value="mouse"/>
</dbReference>
<dbReference type="PRO" id="PR:Q8VEG0"/>
<dbReference type="Proteomes" id="UP000000589">
    <property type="component" value="Chromosome 9"/>
</dbReference>
<dbReference type="RNAct" id="Q8VEG0">
    <property type="molecule type" value="protein"/>
</dbReference>
<dbReference type="Bgee" id="ENSMUSG00000049305">
    <property type="expression patterns" value="Expressed in embryonic brain and 247 other cell types or tissues"/>
</dbReference>
<dbReference type="ExpressionAtlas" id="Q8VEG0">
    <property type="expression patterns" value="baseline and differential"/>
</dbReference>
<dbReference type="InterPro" id="IPR026695">
    <property type="entry name" value="Ccdc71/71L"/>
</dbReference>
<dbReference type="PANTHER" id="PTHR14484">
    <property type="entry name" value="COILED-COIL DOMAIN-CONTAINING PROTEIN 71"/>
    <property type="match status" value="1"/>
</dbReference>
<dbReference type="PANTHER" id="PTHR14484:SF0">
    <property type="entry name" value="COILED-COIL DOMAIN-CONTAINING PROTEIN 71"/>
    <property type="match status" value="1"/>
</dbReference>
<dbReference type="Pfam" id="PF15374">
    <property type="entry name" value="CCDC71L"/>
    <property type="match status" value="1"/>
</dbReference>
<name>CCD71_MOUSE</name>
<feature type="chain" id="PRO_0000234422" description="Coiled-coil domain-containing protein 71">
    <location>
        <begin position="1"/>
        <end position="433"/>
    </location>
</feature>
<feature type="region of interest" description="Disordered" evidence="3">
    <location>
        <begin position="204"/>
        <end position="256"/>
    </location>
</feature>
<feature type="region of interest" description="Disordered" evidence="3">
    <location>
        <begin position="284"/>
        <end position="310"/>
    </location>
</feature>
<feature type="region of interest" description="Disordered" evidence="3">
    <location>
        <begin position="325"/>
        <end position="396"/>
    </location>
</feature>
<feature type="coiled-coil region" evidence="2">
    <location>
        <begin position="260"/>
        <end position="330"/>
    </location>
</feature>
<feature type="compositionally biased region" description="Basic residues" evidence="3">
    <location>
        <begin position="216"/>
        <end position="230"/>
    </location>
</feature>
<feature type="compositionally biased region" description="Basic residues" evidence="3">
    <location>
        <begin position="288"/>
        <end position="306"/>
    </location>
</feature>
<feature type="modified residue" description="Phosphoserine" evidence="1">
    <location>
        <position position="125"/>
    </location>
</feature>
<feature type="sequence conflict" description="In Ref. 1; BAE29140." evidence="4" ref="1">
    <original>R</original>
    <variation>W</variation>
    <location>
        <position position="312"/>
    </location>
</feature>
<sequence>MSMVVQPVEEKAVHSWSRISTAGKKALEEALLVFNPMSQDLSATEAQLVAFLQGLRDDGFQPTILRSGDVYGYSSCTASPPSQTKLQARTINPPATSLPKTAVSVPAGRTTLLPVPLSGRLAKGSTAALAKHATTNLLLSSLKQSSASNSSGTTVGFPAHLYPGVYPAMRLSVVLEALVPLKTPCLDVKHGAQSLQLSLAKSPLKVRKASGNPKSKAPRKITSKGLKHLTSKGPGAGLRRGAGTQSNGAQRKGCSALGPKTVQAQASQTLIKAARAHASVAQTQTKTVRVRAKAKQAKPKAARAKAKAAVVRDKAKDKVIQAKAKAAQTKHKGKPKGSVQTRTGRANRKNSSETVGRKRKKAEETKGLPPKKRARCVPRPPKVWLGPGTAKPRKSQTIKVDRKCSDDEVRQCAQQILRVNLSPVVWLQPLLPF</sequence>
<proteinExistence type="evidence at transcript level"/>
<organism>
    <name type="scientific">Mus musculus</name>
    <name type="common">Mouse</name>
    <dbReference type="NCBI Taxonomy" id="10090"/>
    <lineage>
        <taxon>Eukaryota</taxon>
        <taxon>Metazoa</taxon>
        <taxon>Chordata</taxon>
        <taxon>Craniata</taxon>
        <taxon>Vertebrata</taxon>
        <taxon>Euteleostomi</taxon>
        <taxon>Mammalia</taxon>
        <taxon>Eutheria</taxon>
        <taxon>Euarchontoglires</taxon>
        <taxon>Glires</taxon>
        <taxon>Rodentia</taxon>
        <taxon>Myomorpha</taxon>
        <taxon>Muroidea</taxon>
        <taxon>Muridae</taxon>
        <taxon>Murinae</taxon>
        <taxon>Mus</taxon>
        <taxon>Mus</taxon>
    </lineage>
</organism>
<accession>Q8VEG0</accession>
<accession>Q3UDX1</accession>